<gene>
    <name type="primary">Y-3</name>
    <name type="ordered locus">At3g17950</name>
    <name type="ORF">MEB5.1</name>
    <name type="ORF">MEB5.17</name>
</gene>
<feature type="chain" id="PRO_0000317076" description="Uncharacterized protein At3g17950">
    <location>
        <begin position="1"/>
        <end position="211"/>
    </location>
</feature>
<feature type="region of interest" description="Disordered" evidence="1">
    <location>
        <begin position="1"/>
        <end position="27"/>
    </location>
</feature>
<feature type="region of interest" description="Disordered" evidence="1">
    <location>
        <begin position="54"/>
        <end position="94"/>
    </location>
</feature>
<feature type="compositionally biased region" description="Low complexity" evidence="1">
    <location>
        <begin position="1"/>
        <end position="19"/>
    </location>
</feature>
<feature type="compositionally biased region" description="Low complexity" evidence="1">
    <location>
        <begin position="61"/>
        <end position="74"/>
    </location>
</feature>
<feature type="splice variant" id="VSP_030861" description="In isoform 2." evidence="3">
    <location>
        <begin position="1"/>
        <end position="39"/>
    </location>
</feature>
<feature type="sequence conflict" description="In Ref. 4; AAT68373." evidence="4" ref="4">
    <original>P</original>
    <variation>L</variation>
    <location>
        <position position="178"/>
    </location>
</feature>
<feature type="sequence conflict" description="In Ref. 4; AAT68372/AAT68373." evidence="4" ref="4">
    <original>T</original>
    <variation>A</variation>
    <location>
        <position position="189"/>
    </location>
</feature>
<protein>
    <recommendedName>
        <fullName>Uncharacterized protein At3g17950</fullName>
    </recommendedName>
</protein>
<dbReference type="EMBL" id="AB019230">
    <property type="status" value="NOT_ANNOTATED_CDS"/>
    <property type="molecule type" value="Genomic_DNA"/>
</dbReference>
<dbReference type="EMBL" id="CP002686">
    <property type="protein sequence ID" value="AEE76028.1"/>
    <property type="molecule type" value="Genomic_DNA"/>
</dbReference>
<dbReference type="EMBL" id="CP002686">
    <property type="protein sequence ID" value="AEE76029.1"/>
    <property type="molecule type" value="Genomic_DNA"/>
</dbReference>
<dbReference type="EMBL" id="AY649291">
    <property type="protein sequence ID" value="AAT69208.1"/>
    <property type="molecule type" value="mRNA"/>
</dbReference>
<dbReference type="EMBL" id="AY600573">
    <property type="protein sequence ID" value="AAT68372.1"/>
    <property type="molecule type" value="mRNA"/>
</dbReference>
<dbReference type="EMBL" id="AY600574">
    <property type="protein sequence ID" value="AAT68373.1"/>
    <property type="molecule type" value="mRNA"/>
</dbReference>
<dbReference type="RefSeq" id="NP_001030719.1">
    <molecule id="Q6DR24-2"/>
    <property type="nucleotide sequence ID" value="NM_001035642.2"/>
</dbReference>
<dbReference type="RefSeq" id="NP_188422.1">
    <molecule id="Q6DR24-1"/>
    <property type="nucleotide sequence ID" value="NM_112676.3"/>
</dbReference>
<dbReference type="FunCoup" id="Q6DR24">
    <property type="interactions" value="26"/>
</dbReference>
<dbReference type="IntAct" id="Q6DR24">
    <property type="interactions" value="2"/>
</dbReference>
<dbReference type="iPTMnet" id="Q6DR24"/>
<dbReference type="PaxDb" id="3702-AT3G17950.1"/>
<dbReference type="EnsemblPlants" id="AT3G17950.1">
    <molecule id="Q6DR24-1"/>
    <property type="protein sequence ID" value="AT3G17950.1"/>
    <property type="gene ID" value="AT3G17950"/>
</dbReference>
<dbReference type="EnsemblPlants" id="AT3G17950.2">
    <molecule id="Q6DR24-2"/>
    <property type="protein sequence ID" value="AT3G17950.2"/>
    <property type="gene ID" value="AT3G17950"/>
</dbReference>
<dbReference type="GeneID" id="820807"/>
<dbReference type="Gramene" id="AT3G17950.1">
    <molecule id="Q6DR24-1"/>
    <property type="protein sequence ID" value="AT3G17950.1"/>
    <property type="gene ID" value="AT3G17950"/>
</dbReference>
<dbReference type="Gramene" id="AT3G17950.2">
    <molecule id="Q6DR24-2"/>
    <property type="protein sequence ID" value="AT3G17950.2"/>
    <property type="gene ID" value="AT3G17950"/>
</dbReference>
<dbReference type="KEGG" id="ath:AT3G17950"/>
<dbReference type="Araport" id="AT3G17950"/>
<dbReference type="TAIR" id="AT3G17950"/>
<dbReference type="eggNOG" id="ENOG502RXK1">
    <property type="taxonomic scope" value="Eukaryota"/>
</dbReference>
<dbReference type="HOGENOM" id="CLU_086885_0_0_1"/>
<dbReference type="InParanoid" id="Q6DR24"/>
<dbReference type="OMA" id="WKLCRED"/>
<dbReference type="PhylomeDB" id="Q6DR24"/>
<dbReference type="PRO" id="PR:Q6DR24"/>
<dbReference type="Proteomes" id="UP000006548">
    <property type="component" value="Chromosome 3"/>
</dbReference>
<dbReference type="ExpressionAtlas" id="Q6DR24">
    <property type="expression patterns" value="baseline and differential"/>
</dbReference>
<dbReference type="InterPro" id="IPR040344">
    <property type="entry name" value="At3g17950-like"/>
</dbReference>
<dbReference type="PANTHER" id="PTHR33544">
    <property type="entry name" value="DUF4005 DOMAIN-CONTAINING PROTEIN-RELATED"/>
    <property type="match status" value="1"/>
</dbReference>
<dbReference type="PANTHER" id="PTHR33544:SF15">
    <property type="entry name" value="OS06G0256800 PROTEIN"/>
    <property type="match status" value="1"/>
</dbReference>
<sequence>MQDPHVPSSPTISSVSSSDLDTESTGSFFHDRSITLGTLMGFSFTATMPMPFRASSRRHVSPSVAISRASSSNARRNHQRKRPPSNSAEPEPHRRRKWWRFCRDDDDDAAGNGIHRGTGDSKRSSLGEYLEVERRFGDEAVYNSAEAELEDAVVARYQDQQPVMGERALFADGRVLPPASAEVVTGEGTPVATSLCRFPVSLTGICSGGGG</sequence>
<reference key="1">
    <citation type="journal article" date="2000" name="DNA Res.">
        <title>Structural analysis of Arabidopsis thaliana chromosome 3. I. Sequence features of the regions of 4,504,864 bp covered by sixty P1 and TAC clones.</title>
        <authorList>
            <person name="Sato S."/>
            <person name="Nakamura Y."/>
            <person name="Kaneko T."/>
            <person name="Katoh T."/>
            <person name="Asamizu E."/>
            <person name="Tabata S."/>
        </authorList>
    </citation>
    <scope>NUCLEOTIDE SEQUENCE [LARGE SCALE GENOMIC DNA]</scope>
    <source>
        <strain>cv. Columbia</strain>
    </source>
</reference>
<reference key="2">
    <citation type="journal article" date="2017" name="Plant J.">
        <title>Araport11: a complete reannotation of the Arabidopsis thaliana reference genome.</title>
        <authorList>
            <person name="Cheng C.Y."/>
            <person name="Krishnakumar V."/>
            <person name="Chan A.P."/>
            <person name="Thibaud-Nissen F."/>
            <person name="Schobel S."/>
            <person name="Town C.D."/>
        </authorList>
    </citation>
    <scope>GENOME REANNOTATION</scope>
    <source>
        <strain>cv. Columbia</strain>
    </source>
</reference>
<reference key="3">
    <citation type="submission" date="2004-06" db="EMBL/GenBank/DDBJ databases">
        <authorList>
            <person name="Underwood B.A."/>
            <person name="Xiao Y.-L."/>
            <person name="Moskal W.A. Jr."/>
            <person name="Monaghan E.L."/>
            <person name="Wang W."/>
            <person name="Redman J.C."/>
            <person name="Wu H.C."/>
            <person name="Utterback T."/>
            <person name="Town C.D."/>
        </authorList>
    </citation>
    <scope>NUCLEOTIDE SEQUENCE [LARGE SCALE MRNA] (ISOFORM 1)</scope>
    <source>
        <strain>cv. Columbia</strain>
    </source>
</reference>
<reference key="4">
    <citation type="submission" date="2004-04" db="EMBL/GenBank/DDBJ databases">
        <title>Reconstruction of cDNA sequences for hypothetical genes in Arabidopsis thaliana from 5' and 3' RACE products.</title>
        <authorList>
            <person name="Xiao Y.-L."/>
            <person name="Underwood B."/>
            <person name="Moskal W.A. Jr."/>
            <person name="Torian U."/>
            <person name="Redman J.C."/>
            <person name="Wu H.C."/>
            <person name="Utterback T."/>
            <person name="Town C.D."/>
        </authorList>
    </citation>
    <scope>NUCLEOTIDE SEQUENCE [LARGE SCALE MRNA] (ISOFORMS 1 AND 2)</scope>
    <source>
        <strain>cv. Columbia</strain>
    </source>
</reference>
<reference key="5">
    <citation type="journal article" date="2004" name="Biosci. Biotechnol. Biochem.">
        <title>Identification of three clones which commonly interact with the kinase domains of highly homologous two receptor-like kinases, RLK902 and RKL1.</title>
        <authorList>
            <person name="Tarutani Y."/>
            <person name="Sasaki A."/>
            <person name="Yasuda M."/>
            <person name="Nakashita H."/>
            <person name="Yoshida S."/>
            <person name="Yamaguchi I."/>
            <person name="Suzuki Y."/>
        </authorList>
    </citation>
    <scope>INTERACTION WITH RLK902</scope>
    <scope>TISSUE SPECIFICITY</scope>
    <scope>INDUCTION</scope>
</reference>
<evidence type="ECO:0000256" key="1">
    <source>
        <dbReference type="SAM" id="MobiDB-lite"/>
    </source>
</evidence>
<evidence type="ECO:0000269" key="2">
    <source>
    </source>
</evidence>
<evidence type="ECO:0000303" key="3">
    <source ref="4"/>
</evidence>
<evidence type="ECO:0000305" key="4"/>
<keyword id="KW-0025">Alternative splicing</keyword>
<keyword id="KW-1185">Reference proteome</keyword>
<name>Y3795_ARATH</name>
<accession>Q6DR24</accession>
<accession>Q6E249</accession>
<accession>Q6E250</accession>
<organism>
    <name type="scientific">Arabidopsis thaliana</name>
    <name type="common">Mouse-ear cress</name>
    <dbReference type="NCBI Taxonomy" id="3702"/>
    <lineage>
        <taxon>Eukaryota</taxon>
        <taxon>Viridiplantae</taxon>
        <taxon>Streptophyta</taxon>
        <taxon>Embryophyta</taxon>
        <taxon>Tracheophyta</taxon>
        <taxon>Spermatophyta</taxon>
        <taxon>Magnoliopsida</taxon>
        <taxon>eudicotyledons</taxon>
        <taxon>Gunneridae</taxon>
        <taxon>Pentapetalae</taxon>
        <taxon>rosids</taxon>
        <taxon>malvids</taxon>
        <taxon>Brassicales</taxon>
        <taxon>Brassicaceae</taxon>
        <taxon>Camelineae</taxon>
        <taxon>Arabidopsis</taxon>
    </lineage>
</organism>
<comment type="subunit">
    <text evidence="2">Interacts with RLK902.</text>
</comment>
<comment type="alternative products">
    <event type="alternative splicing"/>
    <isoform>
        <id>Q6DR24-1</id>
        <name>1</name>
        <sequence type="displayed"/>
    </isoform>
    <isoform>
        <id>Q6DR24-2</id>
        <name>2</name>
        <sequence type="described" ref="VSP_030861"/>
    </isoform>
</comment>
<comment type="tissue specificity">
    <text evidence="2">Expressed in inflorescences, stems, rosette leaves and weakly in roots.</text>
</comment>
<comment type="induction">
    <text evidence="2">Rapid but transient down-regulation by wounding, salicylic acid treatment or pathogen infection.</text>
</comment>
<proteinExistence type="evidence at protein level"/>